<comment type="function">
    <text evidence="1">Transport of potassium into the cell. Likely operates as a K(+):H(+) symporter.</text>
</comment>
<comment type="catalytic activity">
    <reaction evidence="1">
        <text>K(+)(in) + H(+)(in) = K(+)(out) + H(+)(out)</text>
        <dbReference type="Rhea" id="RHEA:28490"/>
        <dbReference type="ChEBI" id="CHEBI:15378"/>
        <dbReference type="ChEBI" id="CHEBI:29103"/>
    </reaction>
    <physiologicalReaction direction="right-to-left" evidence="1">
        <dbReference type="Rhea" id="RHEA:28492"/>
    </physiologicalReaction>
</comment>
<comment type="subcellular location">
    <subcellularLocation>
        <location evidence="1">Cell inner membrane</location>
        <topology evidence="1">Multi-pass membrane protein</topology>
    </subcellularLocation>
</comment>
<comment type="similarity">
    <text evidence="1">Belongs to the HAK/KUP transporter (TC 2.A.72) family.</text>
</comment>
<evidence type="ECO:0000255" key="1">
    <source>
        <dbReference type="HAMAP-Rule" id="MF_01522"/>
    </source>
</evidence>
<feature type="chain" id="PRO_0000315992" description="Probable potassium transport system protein Kup 3">
    <location>
        <begin position="1"/>
        <end position="633"/>
    </location>
</feature>
<feature type="transmembrane region" description="Helical" evidence="1">
    <location>
        <begin position="61"/>
        <end position="81"/>
    </location>
</feature>
<feature type="transmembrane region" description="Helical" evidence="1">
    <location>
        <begin position="107"/>
        <end position="127"/>
    </location>
</feature>
<feature type="transmembrane region" description="Helical" evidence="1">
    <location>
        <begin position="143"/>
        <end position="163"/>
    </location>
</feature>
<feature type="transmembrane region" description="Helical" evidence="1">
    <location>
        <begin position="173"/>
        <end position="193"/>
    </location>
</feature>
<feature type="transmembrane region" description="Helical" evidence="1">
    <location>
        <begin position="211"/>
        <end position="231"/>
    </location>
</feature>
<feature type="transmembrane region" description="Helical" evidence="1">
    <location>
        <begin position="255"/>
        <end position="275"/>
    </location>
</feature>
<feature type="transmembrane region" description="Helical" evidence="1">
    <location>
        <begin position="287"/>
        <end position="307"/>
    </location>
</feature>
<feature type="transmembrane region" description="Helical" evidence="1">
    <location>
        <begin position="345"/>
        <end position="365"/>
    </location>
</feature>
<feature type="transmembrane region" description="Helical" evidence="1">
    <location>
        <begin position="371"/>
        <end position="391"/>
    </location>
</feature>
<feature type="transmembrane region" description="Helical" evidence="1">
    <location>
        <begin position="402"/>
        <end position="422"/>
    </location>
</feature>
<feature type="transmembrane region" description="Helical" evidence="1">
    <location>
        <begin position="427"/>
        <end position="447"/>
    </location>
</feature>
<protein>
    <recommendedName>
        <fullName evidence="1">Probable potassium transport system protein Kup 3</fullName>
    </recommendedName>
</protein>
<organism>
    <name type="scientific">Sinorhizobium medicae (strain WSM419)</name>
    <name type="common">Ensifer medicae</name>
    <dbReference type="NCBI Taxonomy" id="366394"/>
    <lineage>
        <taxon>Bacteria</taxon>
        <taxon>Pseudomonadati</taxon>
        <taxon>Pseudomonadota</taxon>
        <taxon>Alphaproteobacteria</taxon>
        <taxon>Hyphomicrobiales</taxon>
        <taxon>Rhizobiaceae</taxon>
        <taxon>Sinorhizobium/Ensifer group</taxon>
        <taxon>Sinorhizobium</taxon>
    </lineage>
</organism>
<keyword id="KW-0997">Cell inner membrane</keyword>
<keyword id="KW-1003">Cell membrane</keyword>
<keyword id="KW-0406">Ion transport</keyword>
<keyword id="KW-0472">Membrane</keyword>
<keyword id="KW-0614">Plasmid</keyword>
<keyword id="KW-0630">Potassium</keyword>
<keyword id="KW-0633">Potassium transport</keyword>
<keyword id="KW-0769">Symport</keyword>
<keyword id="KW-0812">Transmembrane</keyword>
<keyword id="KW-1133">Transmembrane helix</keyword>
<keyword id="KW-0813">Transport</keyword>
<proteinExistence type="inferred from homology"/>
<accession>A6UMS8</accession>
<geneLocation type="plasmid">
    <name>pSMED03</name>
</geneLocation>
<dbReference type="EMBL" id="CP000741">
    <property type="protein sequence ID" value="ABR64958.1"/>
    <property type="molecule type" value="Genomic_DNA"/>
</dbReference>
<dbReference type="RefSeq" id="WP_011971114.1">
    <property type="nucleotide sequence ID" value="NC_009622.1"/>
</dbReference>
<dbReference type="RefSeq" id="YP_001314891.1">
    <property type="nucleotide sequence ID" value="NC_009622.1"/>
</dbReference>
<dbReference type="KEGG" id="smd:Smed_6370"/>
<dbReference type="PATRIC" id="fig|366394.8.peg.2893"/>
<dbReference type="HOGENOM" id="CLU_008142_4_2_5"/>
<dbReference type="OrthoDB" id="9805577at2"/>
<dbReference type="Proteomes" id="UP000001108">
    <property type="component" value="Plasmid pSMED03"/>
</dbReference>
<dbReference type="GO" id="GO:0005886">
    <property type="term" value="C:plasma membrane"/>
    <property type="evidence" value="ECO:0007669"/>
    <property type="project" value="UniProtKB-SubCell"/>
</dbReference>
<dbReference type="GO" id="GO:0015079">
    <property type="term" value="F:potassium ion transmembrane transporter activity"/>
    <property type="evidence" value="ECO:0007669"/>
    <property type="project" value="UniProtKB-UniRule"/>
</dbReference>
<dbReference type="GO" id="GO:0015293">
    <property type="term" value="F:symporter activity"/>
    <property type="evidence" value="ECO:0007669"/>
    <property type="project" value="UniProtKB-UniRule"/>
</dbReference>
<dbReference type="HAMAP" id="MF_01522">
    <property type="entry name" value="Kup"/>
    <property type="match status" value="1"/>
</dbReference>
<dbReference type="InterPro" id="IPR003855">
    <property type="entry name" value="K+_transporter"/>
</dbReference>
<dbReference type="InterPro" id="IPR053952">
    <property type="entry name" value="K_trans_C"/>
</dbReference>
<dbReference type="InterPro" id="IPR053951">
    <property type="entry name" value="K_trans_N"/>
</dbReference>
<dbReference type="InterPro" id="IPR023051">
    <property type="entry name" value="Kup"/>
</dbReference>
<dbReference type="PANTHER" id="PTHR30540:SF79">
    <property type="entry name" value="LOW AFFINITY POTASSIUM TRANSPORT SYSTEM PROTEIN KUP"/>
    <property type="match status" value="1"/>
</dbReference>
<dbReference type="PANTHER" id="PTHR30540">
    <property type="entry name" value="OSMOTIC STRESS POTASSIUM TRANSPORTER"/>
    <property type="match status" value="1"/>
</dbReference>
<dbReference type="Pfam" id="PF02705">
    <property type="entry name" value="K_trans"/>
    <property type="match status" value="1"/>
</dbReference>
<dbReference type="Pfam" id="PF22776">
    <property type="entry name" value="K_trans_C"/>
    <property type="match status" value="1"/>
</dbReference>
<gene>
    <name evidence="1" type="primary">kup3</name>
    <name type="ordered locus">Smed_6370</name>
</gene>
<name>KUP3_SINMW</name>
<sequence>MADSLDHAPAQANNLPQFLALTIGSIGVVYGDIGTSPLYAFREALRPFGPGGVGRDEVIGLVSLVLWTLTAIVTIKYVLFLLRADNDGEGGTLSLLALLLKKGTKYPVLMFFAGVLGAALFIGDAMITPALSVLSAVEGLKLVAPALHDYVLPISVVIILLLFAVQSRGTGAVSVFFGPITLVWFLVMAAAGVAHIGDDLAILSAFNPLNAIGFLWNAGLIGFIVLGAIFLTVTGAEALYADLGHFGRHSIQAAWFAVVFPALALNYLGQGALVLSHPDAISNPFFLMFPNWALLPMVILATAGTIIASQSVITGAFSLIRQAIHLGFLPRFEICYTSETQTGQIYLPLVNTILLTGVLALMLMFGSSEALAPAYGVSITGAMVIDTILAFEFVRRQWGWPALTAIAVLLPLFSLELIFLGANLFKIHHGGYVPILIAGTLIMMMWTWRKGVSLLREKTARQDVPLDQFIATVERKSEHAPVEVPGTAIFLTATPDTTPAVLLHNIKHNHVLHQHNVIMTIKTAKVPYVPEKDRYTITKLSDRFSLLELRFGFMDDQNVSRALVRCRKEGFRFEIMSTSFYLGRRKLIADPRSGLPQWQDKLFIAMADSAIDPTEYFHLPANRVVELGEQVII</sequence>
<reference key="1">
    <citation type="submission" date="2007-06" db="EMBL/GenBank/DDBJ databases">
        <title>Complete sequence of Sinorhizobium medicae WSM419 plasmid pSMED03.</title>
        <authorList>
            <consortium name="US DOE Joint Genome Institute"/>
            <person name="Copeland A."/>
            <person name="Lucas S."/>
            <person name="Lapidus A."/>
            <person name="Barry K."/>
            <person name="Glavina del Rio T."/>
            <person name="Dalin E."/>
            <person name="Tice H."/>
            <person name="Pitluck S."/>
            <person name="Chain P."/>
            <person name="Malfatti S."/>
            <person name="Shin M."/>
            <person name="Vergez L."/>
            <person name="Schmutz J."/>
            <person name="Larimer F."/>
            <person name="Land M."/>
            <person name="Hauser L."/>
            <person name="Kyrpides N."/>
            <person name="Mikhailova N."/>
            <person name="Reeve W.G."/>
            <person name="Richardson P."/>
        </authorList>
    </citation>
    <scope>NUCLEOTIDE SEQUENCE [LARGE SCALE GENOMIC DNA]</scope>
    <source>
        <strain>WSM419</strain>
    </source>
</reference>